<proteinExistence type="inferred from homology"/>
<accession>Q1CV78</accession>
<gene>
    <name evidence="1" type="primary">rpsT</name>
    <name type="ordered locus">HPAG1_0077</name>
</gene>
<protein>
    <recommendedName>
        <fullName evidence="1">Small ribosomal subunit protein bS20</fullName>
    </recommendedName>
    <alternativeName>
        <fullName evidence="2">30S ribosomal protein S20</fullName>
    </alternativeName>
</protein>
<feature type="chain" id="PRO_0000260120" description="Small ribosomal subunit protein bS20">
    <location>
        <begin position="1"/>
        <end position="89"/>
    </location>
</feature>
<name>RS20_HELPH</name>
<sequence>MANHKSAEKRIRQTIKRTERNRFYKTKVKNIIKAVREAVAINDVAKAQERLKIANKELHKFVSKGILKKNTASRKVSRLNASVKKIALA</sequence>
<reference key="1">
    <citation type="journal article" date="2006" name="Proc. Natl. Acad. Sci. U.S.A.">
        <title>The complete genome sequence of a chronic atrophic gastritis Helicobacter pylori strain: evolution during disease progression.</title>
        <authorList>
            <person name="Oh J.D."/>
            <person name="Kling-Baeckhed H."/>
            <person name="Giannakis M."/>
            <person name="Xu J."/>
            <person name="Fulton R.S."/>
            <person name="Fulton L.A."/>
            <person name="Cordum H.S."/>
            <person name="Wang C."/>
            <person name="Elliott G."/>
            <person name="Edwards J."/>
            <person name="Mardis E.R."/>
            <person name="Engstrand L.G."/>
            <person name="Gordon J.I."/>
        </authorList>
    </citation>
    <scope>NUCLEOTIDE SEQUENCE [LARGE SCALE GENOMIC DNA]</scope>
    <source>
        <strain>HPAG1</strain>
    </source>
</reference>
<organism>
    <name type="scientific">Helicobacter pylori (strain HPAG1)</name>
    <dbReference type="NCBI Taxonomy" id="357544"/>
    <lineage>
        <taxon>Bacteria</taxon>
        <taxon>Pseudomonadati</taxon>
        <taxon>Campylobacterota</taxon>
        <taxon>Epsilonproteobacteria</taxon>
        <taxon>Campylobacterales</taxon>
        <taxon>Helicobacteraceae</taxon>
        <taxon>Helicobacter</taxon>
    </lineage>
</organism>
<keyword id="KW-0687">Ribonucleoprotein</keyword>
<keyword id="KW-0689">Ribosomal protein</keyword>
<keyword id="KW-0694">RNA-binding</keyword>
<keyword id="KW-0699">rRNA-binding</keyword>
<evidence type="ECO:0000255" key="1">
    <source>
        <dbReference type="HAMAP-Rule" id="MF_00500"/>
    </source>
</evidence>
<evidence type="ECO:0000305" key="2"/>
<comment type="function">
    <text evidence="1">Binds directly to 16S ribosomal RNA.</text>
</comment>
<comment type="similarity">
    <text evidence="1">Belongs to the bacterial ribosomal protein bS20 family.</text>
</comment>
<dbReference type="EMBL" id="CP000241">
    <property type="protein sequence ID" value="ABF84144.1"/>
    <property type="molecule type" value="Genomic_DNA"/>
</dbReference>
<dbReference type="RefSeq" id="WP_001273627.1">
    <property type="nucleotide sequence ID" value="NC_008086.1"/>
</dbReference>
<dbReference type="SMR" id="Q1CV78"/>
<dbReference type="KEGG" id="hpa:HPAG1_0077"/>
<dbReference type="HOGENOM" id="CLU_160655_3_0_7"/>
<dbReference type="GO" id="GO:0005829">
    <property type="term" value="C:cytosol"/>
    <property type="evidence" value="ECO:0007669"/>
    <property type="project" value="TreeGrafter"/>
</dbReference>
<dbReference type="GO" id="GO:0015935">
    <property type="term" value="C:small ribosomal subunit"/>
    <property type="evidence" value="ECO:0007669"/>
    <property type="project" value="TreeGrafter"/>
</dbReference>
<dbReference type="GO" id="GO:0070181">
    <property type="term" value="F:small ribosomal subunit rRNA binding"/>
    <property type="evidence" value="ECO:0007669"/>
    <property type="project" value="TreeGrafter"/>
</dbReference>
<dbReference type="GO" id="GO:0003735">
    <property type="term" value="F:structural constituent of ribosome"/>
    <property type="evidence" value="ECO:0007669"/>
    <property type="project" value="InterPro"/>
</dbReference>
<dbReference type="GO" id="GO:0006412">
    <property type="term" value="P:translation"/>
    <property type="evidence" value="ECO:0007669"/>
    <property type="project" value="UniProtKB-UniRule"/>
</dbReference>
<dbReference type="FunFam" id="1.20.58.110:FF:000001">
    <property type="entry name" value="30S ribosomal protein S20"/>
    <property type="match status" value="1"/>
</dbReference>
<dbReference type="Gene3D" id="1.20.58.110">
    <property type="entry name" value="Ribosomal protein S20"/>
    <property type="match status" value="1"/>
</dbReference>
<dbReference type="HAMAP" id="MF_00500">
    <property type="entry name" value="Ribosomal_bS20"/>
    <property type="match status" value="1"/>
</dbReference>
<dbReference type="InterPro" id="IPR002583">
    <property type="entry name" value="Ribosomal_bS20"/>
</dbReference>
<dbReference type="InterPro" id="IPR036510">
    <property type="entry name" value="Ribosomal_bS20_sf"/>
</dbReference>
<dbReference type="NCBIfam" id="TIGR00029">
    <property type="entry name" value="S20"/>
    <property type="match status" value="1"/>
</dbReference>
<dbReference type="PANTHER" id="PTHR33398">
    <property type="entry name" value="30S RIBOSOMAL PROTEIN S20"/>
    <property type="match status" value="1"/>
</dbReference>
<dbReference type="PANTHER" id="PTHR33398:SF1">
    <property type="entry name" value="SMALL RIBOSOMAL SUBUNIT PROTEIN BS20C"/>
    <property type="match status" value="1"/>
</dbReference>
<dbReference type="Pfam" id="PF01649">
    <property type="entry name" value="Ribosomal_S20p"/>
    <property type="match status" value="1"/>
</dbReference>
<dbReference type="SUPFAM" id="SSF46992">
    <property type="entry name" value="Ribosomal protein S20"/>
    <property type="match status" value="1"/>
</dbReference>